<sequence>MSAIAPGMILFAYLCGSISSAILVCRIAGLPDPRESGSGNPGATNVLRIGGKGAAVAVLIFDILKGMLPVWGAYALGVTPFWLGLIAIAACLGHIWPVFFGFKGGKGVATAFGAIAPIGWDLTGVMAGTWLLTVLLSGYSSLGAIVSALIAPFYVWWFKPQFTFPVSMLSCLILLRHHDNIQRLWRRQETKIWTKLKKKRQKD</sequence>
<gene>
    <name evidence="1" type="primary">plsY</name>
    <name type="synonym">ygiH</name>
    <name type="ordered locus">SeHA_C3461</name>
</gene>
<name>PLSY_SALHS</name>
<feature type="chain" id="PRO_1000136118" description="Glycerol-3-phosphate acyltransferase">
    <location>
        <begin position="1"/>
        <end position="203"/>
    </location>
</feature>
<feature type="topological domain" description="Periplasmic" evidence="1">
    <location>
        <begin position="1"/>
        <end position="3"/>
    </location>
</feature>
<feature type="transmembrane region" description="Helical" evidence="1">
    <location>
        <begin position="4"/>
        <end position="24"/>
    </location>
</feature>
<feature type="topological domain" description="Cytoplasmic" evidence="1">
    <location>
        <begin position="25"/>
        <end position="52"/>
    </location>
</feature>
<feature type="transmembrane region" description="Helical" evidence="1">
    <location>
        <begin position="53"/>
        <end position="73"/>
    </location>
</feature>
<feature type="topological domain" description="Periplasmic" evidence="1">
    <location>
        <begin position="74"/>
        <end position="80"/>
    </location>
</feature>
<feature type="transmembrane region" description="Helical" evidence="1">
    <location>
        <begin position="81"/>
        <end position="101"/>
    </location>
</feature>
<feature type="topological domain" description="Cytoplasmic" evidence="1">
    <location>
        <begin position="102"/>
        <end position="111"/>
    </location>
</feature>
<feature type="transmembrane region" description="Helical" evidence="1">
    <location>
        <begin position="112"/>
        <end position="132"/>
    </location>
</feature>
<feature type="topological domain" description="Periplasmic" evidence="1">
    <location>
        <begin position="133"/>
        <end position="137"/>
    </location>
</feature>
<feature type="transmembrane region" description="Helical" evidence="1">
    <location>
        <begin position="138"/>
        <end position="158"/>
    </location>
</feature>
<feature type="topological domain" description="Cytoplasmic" evidence="1">
    <location>
        <begin position="159"/>
        <end position="203"/>
    </location>
</feature>
<organism>
    <name type="scientific">Salmonella heidelberg (strain SL476)</name>
    <dbReference type="NCBI Taxonomy" id="454169"/>
    <lineage>
        <taxon>Bacteria</taxon>
        <taxon>Pseudomonadati</taxon>
        <taxon>Pseudomonadota</taxon>
        <taxon>Gammaproteobacteria</taxon>
        <taxon>Enterobacterales</taxon>
        <taxon>Enterobacteriaceae</taxon>
        <taxon>Salmonella</taxon>
    </lineage>
</organism>
<comment type="function">
    <text evidence="1">Catalyzes the transfer of an acyl group from acyl-ACP to glycerol-3-phosphate (G3P) to form lysophosphatidic acid (LPA). This enzyme can also utilize acyl-CoA as fatty acyl donor, but not acyl-PO(4).</text>
</comment>
<comment type="catalytic activity">
    <reaction evidence="1">
        <text>sn-glycerol 3-phosphate + an acyl-CoA = a 1-acyl-sn-glycero-3-phosphate + CoA</text>
        <dbReference type="Rhea" id="RHEA:15325"/>
        <dbReference type="ChEBI" id="CHEBI:57287"/>
        <dbReference type="ChEBI" id="CHEBI:57597"/>
        <dbReference type="ChEBI" id="CHEBI:57970"/>
        <dbReference type="ChEBI" id="CHEBI:58342"/>
        <dbReference type="EC" id="2.3.1.15"/>
    </reaction>
</comment>
<comment type="catalytic activity">
    <reaction evidence="1">
        <text>a fatty acyl-[ACP] + sn-glycerol 3-phosphate = a 1-acyl-sn-glycero-3-phosphate + holo-[ACP]</text>
        <dbReference type="Rhea" id="RHEA:42300"/>
        <dbReference type="Rhea" id="RHEA-COMP:9685"/>
        <dbReference type="Rhea" id="RHEA-COMP:14125"/>
        <dbReference type="ChEBI" id="CHEBI:57597"/>
        <dbReference type="ChEBI" id="CHEBI:57970"/>
        <dbReference type="ChEBI" id="CHEBI:64479"/>
        <dbReference type="ChEBI" id="CHEBI:138651"/>
        <dbReference type="EC" id="2.3.1.n5"/>
    </reaction>
</comment>
<comment type="pathway">
    <text evidence="1">Lipid metabolism; phospholipid metabolism.</text>
</comment>
<comment type="subunit">
    <text evidence="1">Probably interacts with PlsX.</text>
</comment>
<comment type="subcellular location">
    <subcellularLocation>
        <location evidence="1">Cell inner membrane</location>
        <topology evidence="1">Multi-pass membrane protein</topology>
    </subcellularLocation>
</comment>
<comment type="similarity">
    <text evidence="1">Belongs to the PlsY family.</text>
</comment>
<keyword id="KW-0997">Cell inner membrane</keyword>
<keyword id="KW-1003">Cell membrane</keyword>
<keyword id="KW-0444">Lipid biosynthesis</keyword>
<keyword id="KW-0443">Lipid metabolism</keyword>
<keyword id="KW-0472">Membrane</keyword>
<keyword id="KW-0594">Phospholipid biosynthesis</keyword>
<keyword id="KW-1208">Phospholipid metabolism</keyword>
<keyword id="KW-0808">Transferase</keyword>
<keyword id="KW-0812">Transmembrane</keyword>
<keyword id="KW-1133">Transmembrane helix</keyword>
<proteinExistence type="inferred from homology"/>
<protein>
    <recommendedName>
        <fullName evidence="1">Glycerol-3-phosphate acyltransferase</fullName>
    </recommendedName>
    <alternativeName>
        <fullName evidence="1">G3P acyltransferase</fullName>
        <shortName evidence="1">GPAT</shortName>
        <ecNumber evidence="1">2.3.1.15</ecNumber>
        <ecNumber evidence="1">2.3.1.n5</ecNumber>
    </alternativeName>
    <alternativeName>
        <fullName evidence="1">Lysophosphatidic acid synthase</fullName>
        <shortName evidence="1">LPA synthase</shortName>
    </alternativeName>
</protein>
<dbReference type="EC" id="2.3.1.15" evidence="1"/>
<dbReference type="EC" id="2.3.1.n5" evidence="1"/>
<dbReference type="EMBL" id="CP001120">
    <property type="protein sequence ID" value="ACF68224.1"/>
    <property type="molecule type" value="Genomic_DNA"/>
</dbReference>
<dbReference type="RefSeq" id="WP_001272784.1">
    <property type="nucleotide sequence ID" value="NC_011083.1"/>
</dbReference>
<dbReference type="SMR" id="B4TI58"/>
<dbReference type="KEGG" id="seh:SeHA_C3461"/>
<dbReference type="HOGENOM" id="CLU_081254_0_2_6"/>
<dbReference type="UniPathway" id="UPA00085"/>
<dbReference type="Proteomes" id="UP000001866">
    <property type="component" value="Chromosome"/>
</dbReference>
<dbReference type="GO" id="GO:0005886">
    <property type="term" value="C:plasma membrane"/>
    <property type="evidence" value="ECO:0007669"/>
    <property type="project" value="UniProtKB-SubCell"/>
</dbReference>
<dbReference type="GO" id="GO:0043772">
    <property type="term" value="F:acyl-phosphate glycerol-3-phosphate acyltransferase activity"/>
    <property type="evidence" value="ECO:0007669"/>
    <property type="project" value="InterPro"/>
</dbReference>
<dbReference type="GO" id="GO:0004366">
    <property type="term" value="F:glycerol-3-phosphate O-acyltransferase activity"/>
    <property type="evidence" value="ECO:0007669"/>
    <property type="project" value="UniProtKB-UniRule"/>
</dbReference>
<dbReference type="GO" id="GO:0008654">
    <property type="term" value="P:phospholipid biosynthetic process"/>
    <property type="evidence" value="ECO:0007669"/>
    <property type="project" value="UniProtKB-UniRule"/>
</dbReference>
<dbReference type="HAMAP" id="MF_01043">
    <property type="entry name" value="PlsY"/>
    <property type="match status" value="1"/>
</dbReference>
<dbReference type="InterPro" id="IPR003811">
    <property type="entry name" value="G3P_acylTferase_PlsY"/>
</dbReference>
<dbReference type="NCBIfam" id="TIGR00023">
    <property type="entry name" value="glycerol-3-phosphate 1-O-acyltransferase PlsY"/>
    <property type="match status" value="1"/>
</dbReference>
<dbReference type="PANTHER" id="PTHR30309:SF0">
    <property type="entry name" value="GLYCEROL-3-PHOSPHATE ACYLTRANSFERASE-RELATED"/>
    <property type="match status" value="1"/>
</dbReference>
<dbReference type="PANTHER" id="PTHR30309">
    <property type="entry name" value="INNER MEMBRANE PROTEIN YGIH"/>
    <property type="match status" value="1"/>
</dbReference>
<dbReference type="Pfam" id="PF02660">
    <property type="entry name" value="G3P_acyltransf"/>
    <property type="match status" value="1"/>
</dbReference>
<dbReference type="SMART" id="SM01207">
    <property type="entry name" value="G3P_acyltransf"/>
    <property type="match status" value="1"/>
</dbReference>
<accession>B4TI58</accession>
<evidence type="ECO:0000255" key="1">
    <source>
        <dbReference type="HAMAP-Rule" id="MF_01043"/>
    </source>
</evidence>
<reference key="1">
    <citation type="journal article" date="2011" name="J. Bacteriol.">
        <title>Comparative genomics of 28 Salmonella enterica isolates: evidence for CRISPR-mediated adaptive sublineage evolution.</title>
        <authorList>
            <person name="Fricke W.F."/>
            <person name="Mammel M.K."/>
            <person name="McDermott P.F."/>
            <person name="Tartera C."/>
            <person name="White D.G."/>
            <person name="Leclerc J.E."/>
            <person name="Ravel J."/>
            <person name="Cebula T.A."/>
        </authorList>
    </citation>
    <scope>NUCLEOTIDE SEQUENCE [LARGE SCALE GENOMIC DNA]</scope>
    <source>
        <strain>SL476</strain>
    </source>
</reference>